<keyword id="KW-0025">Alternative splicing</keyword>
<keyword id="KW-1048">Host nucleus</keyword>
<keyword id="KW-0472">Membrane</keyword>
<keyword id="KW-0694">RNA-binding</keyword>
<keyword id="KW-0468">Viral matrix protein</keyword>
<keyword id="KW-0946">Virion</keyword>
<sequence>MSLLTEVETYVLSIVPSGPLKAEIAQRLEDVFAGKNTDLEVLMEWLKTRPILSPLTKGILGFVFTLTVPSERGLQRRRFVQNALNGNGDPNNMDRAVKLYRKLKREITFHGAKEVALSYSTGALASCMGLIYNRMGTVTTEVAFGLVCATCEQIADSQHRSHRQMVTTINPLIRHENRMVLASTTAKAMEQMAGSSEQAAEAMEVASQARQMVHAMRTIGTHPSSSAGLRDDLLENLQAYQKRMGVQMQRFK</sequence>
<protein>
    <recommendedName>
        <fullName evidence="1">Matrix protein 1</fullName>
        <shortName evidence="1">M1</shortName>
    </recommendedName>
</protein>
<comment type="function">
    <text evidence="1">Plays critical roles in virus replication, from virus entry and uncoating to assembly and budding of the virus particle. M1 binding to ribonucleocapsids (RNPs) in nucleus seems to inhibit viral transcription. Interaction of viral NEP with M1-RNP is thought to promote nuclear export of the complex, which is targeted to the virion assembly site at the apical plasma membrane in polarized epithelial cells. Interactions with NA and HA may bring M1, a non-raft-associated protein, into lipid rafts. Forms a continuous shell on the inner side of the lipid bilayer in virion, where it binds the RNP. During virus entry into cell, the M2 ion channel acidifies the internal virion core, inducing M1 dissociation from the RNP. M1-free RNPs are transported to the nucleus, where viral transcription and replication can take place.</text>
</comment>
<comment type="function">
    <text evidence="1">Determines the virion's shape: spherical or filamentous. Clinical isolates of influenza are characterized by the presence of significant proportion of filamentous virions, whereas after multiple passage on eggs or cell culture, virions have only spherical morphology. Filamentous virions are thought to be important to infect neighboring cells, and spherical virions more suited to spread through aerosol between hosts organisms.</text>
</comment>
<comment type="subunit">
    <text evidence="1">Homodimer and homomultimer. Interacts with NEP. Binds ribonucleocapsid by both interacting with genomic RNA and NP protein. May interact with HA and NA. Cannot bind NP without genomic RNA.</text>
</comment>
<comment type="subcellular location">
    <subcellularLocation>
        <location evidence="1">Virion membrane</location>
        <topology evidence="1">Peripheral membrane protein</topology>
        <orientation evidence="1">Cytoplasmic side</orientation>
    </subcellularLocation>
    <subcellularLocation>
        <location evidence="1">Host nucleus</location>
    </subcellularLocation>
</comment>
<comment type="alternative products">
    <event type="alternative splicing"/>
    <isoform>
        <id>Q0A2I5-1</id>
        <name>M1</name>
        <sequence type="displayed"/>
    </isoform>
    <isoform>
        <id>Q0A2I6-1</id>
        <name>M2</name>
        <sequence type="external"/>
    </isoform>
    <text>Only the first 9 residues are shared by the 2 isoforms.</text>
</comment>
<comment type="miscellaneous">
    <text evidence="1">Most abundant protein in virion. When expressed alone can form virus-like particles in transfected cells.</text>
</comment>
<comment type="similarity">
    <text evidence="1">Belongs to the influenza viruses Matrix protein M1 family.</text>
</comment>
<accession>Q0A2I5</accession>
<evidence type="ECO:0000255" key="1">
    <source>
        <dbReference type="HAMAP-Rule" id="MF_04068"/>
    </source>
</evidence>
<dbReference type="EMBL" id="CY015074">
    <property type="protein sequence ID" value="ABI85096.1"/>
    <property type="molecule type" value="Genomic_RNA"/>
</dbReference>
<dbReference type="SMR" id="Q0A2I5"/>
<dbReference type="Proteomes" id="UP000008584">
    <property type="component" value="Genome"/>
</dbReference>
<dbReference type="GO" id="GO:0042025">
    <property type="term" value="C:host cell nucleus"/>
    <property type="evidence" value="ECO:0007669"/>
    <property type="project" value="UniProtKB-SubCell"/>
</dbReference>
<dbReference type="GO" id="GO:0016020">
    <property type="term" value="C:membrane"/>
    <property type="evidence" value="ECO:0007669"/>
    <property type="project" value="UniProtKB-KW"/>
</dbReference>
<dbReference type="GO" id="GO:0055036">
    <property type="term" value="C:virion membrane"/>
    <property type="evidence" value="ECO:0007669"/>
    <property type="project" value="UniProtKB-SubCell"/>
</dbReference>
<dbReference type="GO" id="GO:0003723">
    <property type="term" value="F:RNA binding"/>
    <property type="evidence" value="ECO:0007669"/>
    <property type="project" value="UniProtKB-UniRule"/>
</dbReference>
<dbReference type="GO" id="GO:0039660">
    <property type="term" value="F:structural constituent of virion"/>
    <property type="evidence" value="ECO:0007669"/>
    <property type="project" value="UniProtKB-UniRule"/>
</dbReference>
<dbReference type="GO" id="GO:0046761">
    <property type="term" value="P:viral budding from plasma membrane"/>
    <property type="evidence" value="ECO:0007669"/>
    <property type="project" value="UniProtKB-UniRule"/>
</dbReference>
<dbReference type="FunFam" id="1.10.10.180:FF:000001">
    <property type="entry name" value="Matrix protein 1"/>
    <property type="match status" value="1"/>
</dbReference>
<dbReference type="FunFam" id="1.20.91.10:FF:000001">
    <property type="entry name" value="Matrix protein 1"/>
    <property type="match status" value="1"/>
</dbReference>
<dbReference type="Gene3D" id="1.10.10.180">
    <property type="match status" value="1"/>
</dbReference>
<dbReference type="Gene3D" id="1.20.91.10">
    <property type="match status" value="1"/>
</dbReference>
<dbReference type="HAMAP" id="MF_04068">
    <property type="entry name" value="INFV_M1"/>
    <property type="match status" value="1"/>
</dbReference>
<dbReference type="InterPro" id="IPR036039">
    <property type="entry name" value="Flu_matrix_M1"/>
</dbReference>
<dbReference type="InterPro" id="IPR013188">
    <property type="entry name" value="Flu_matrix_M1_C"/>
</dbReference>
<dbReference type="InterPro" id="IPR001561">
    <property type="entry name" value="Flu_matrix_M1_N"/>
</dbReference>
<dbReference type="InterPro" id="IPR015423">
    <property type="entry name" value="Flu_matrix_M1_N_sub1"/>
</dbReference>
<dbReference type="InterPro" id="IPR015799">
    <property type="entry name" value="Flu_matrix_M1_N_sub2"/>
</dbReference>
<dbReference type="InterPro" id="IPR037533">
    <property type="entry name" value="INFV_M1"/>
</dbReference>
<dbReference type="Pfam" id="PF00598">
    <property type="entry name" value="Flu_M1"/>
    <property type="match status" value="1"/>
</dbReference>
<dbReference type="Pfam" id="PF08289">
    <property type="entry name" value="Flu_M1_C"/>
    <property type="match status" value="1"/>
</dbReference>
<dbReference type="SMART" id="SM00759">
    <property type="entry name" value="Flu_M1_C"/>
    <property type="match status" value="1"/>
</dbReference>
<dbReference type="SUPFAM" id="SSF48145">
    <property type="entry name" value="Influenza virus matrix protein M1"/>
    <property type="match status" value="1"/>
</dbReference>
<gene>
    <name evidence="1" type="primary">M</name>
</gene>
<organism>
    <name type="scientific">Influenza A virus (strain A/Chicken/Pennsylvania/1/1983 H5N2)</name>
    <dbReference type="NCBI Taxonomy" id="385586"/>
    <lineage>
        <taxon>Viruses</taxon>
        <taxon>Riboviria</taxon>
        <taxon>Orthornavirae</taxon>
        <taxon>Negarnaviricota</taxon>
        <taxon>Polyploviricotina</taxon>
        <taxon>Insthoviricetes</taxon>
        <taxon>Articulavirales</taxon>
        <taxon>Orthomyxoviridae</taxon>
        <taxon>Alphainfluenzavirus</taxon>
        <taxon>Alphainfluenzavirus influenzae</taxon>
        <taxon>Influenza A virus</taxon>
    </lineage>
</organism>
<feature type="chain" id="PRO_0000326320" description="Matrix protein 1">
    <location>
        <begin position="1"/>
        <end position="252"/>
    </location>
</feature>
<feature type="region of interest" description="Membrane-binding" evidence="1">
    <location>
        <begin position="1"/>
        <end position="164"/>
    </location>
</feature>
<feature type="region of interest" description="RNP-binding" evidence="1">
    <location>
        <begin position="165"/>
        <end position="252"/>
    </location>
</feature>
<feature type="short sequence motif" description="Nuclear localization signal" evidence="1">
    <location>
        <begin position="101"/>
        <end position="105"/>
    </location>
</feature>
<reference key="1">
    <citation type="journal article" date="2006" name="Science">
        <title>Large-scale sequence analysis of avian influenza isolates.</title>
        <authorList>
            <person name="Obenauer J.C."/>
            <person name="Denson J."/>
            <person name="Mehta P.K."/>
            <person name="Su X."/>
            <person name="Mukatira S."/>
            <person name="Finkelstein D.B."/>
            <person name="Xu X."/>
            <person name="Wang J."/>
            <person name="Ma J."/>
            <person name="Fan Y."/>
            <person name="Rakestraw K.M."/>
            <person name="Webster R.G."/>
            <person name="Hoffmann E."/>
            <person name="Krauss S."/>
            <person name="Zheng J."/>
            <person name="Zhang Z."/>
            <person name="Naeve C.W."/>
        </authorList>
    </citation>
    <scope>NUCLEOTIDE SEQUENCE [GENOMIC RNA]</scope>
</reference>
<proteinExistence type="inferred from homology"/>
<organismHost>
    <name type="scientific">Aves</name>
    <dbReference type="NCBI Taxonomy" id="8782"/>
</organismHost>
<name>M1_I83A5</name>